<sequence length="640" mass="69953">MGKIIGIDLGTTNSCVALMEGNKPRVIENAEGDRTTPSVVAFTKEGETLVGQSAKRQAITNPQNTLYAIKRLIGRRFDEEVVQRDIKMVPYKIVKADNGDAWVEATGKKMAPPEVSANVLRKMKKTAEDYLGEEVEAAVITVPAYFNDSQRQATKDAGRIAGLEVKRIINEPTAAALAYGLDKKRGDQKIAVYDLGGGTFDVSIIEIAEVEGEHQFEVLSTNGDTFLGGEDFDKRIIDYIAEEFKKEQSIDLRGDPLAMQRLKDAAEKAKIELSSSQQTEVNLPYVTADASGPKHLNVRITRAKLESLVEDLINRTIGPCKTALQDAKLSASDIDEVILVGGQTRMPKVQEAAKEFFGKEPRKDVNPDEAVAVGAAIQAGVLGGEVKEVLLLDVTPLSLGIETLGGVMTKLIEKNTTIPTRKTQVFSTAEDNQTAVTVHVLQGEREQAVGNKSLGRFDLVGIPPAHRGMPQIEVTFDIDANGILNVSAKDKATGKEQSIVIKASSGLAEGEIERMVSDAEAHVEEDRKFRELVDLRNQGDNLIHATEKSMEELGDKLEANEKSEIEKTIGELKTAMKEDNKEVIEARIKDLTDASAKMAERLYTQQAEEPQPQKEEGKAAEEDVVDAEFEEVKEDKNKAS</sequence>
<protein>
    <recommendedName>
        <fullName evidence="1">Chaperone protein DnaK</fullName>
    </recommendedName>
    <alternativeName>
        <fullName evidence="1">HSP70</fullName>
    </alternativeName>
    <alternativeName>
        <fullName evidence="1">Heat shock 70 kDa protein</fullName>
    </alternativeName>
    <alternativeName>
        <fullName evidence="1">Heat shock protein 70</fullName>
    </alternativeName>
</protein>
<name>DNAK_NITOC</name>
<organism>
    <name type="scientific">Nitrosococcus oceani (strain ATCC 19707 / BCRC 17464 / JCM 30415 / NCIMB 11848 / C-107)</name>
    <dbReference type="NCBI Taxonomy" id="323261"/>
    <lineage>
        <taxon>Bacteria</taxon>
        <taxon>Pseudomonadati</taxon>
        <taxon>Pseudomonadota</taxon>
        <taxon>Gammaproteobacteria</taxon>
        <taxon>Chromatiales</taxon>
        <taxon>Chromatiaceae</taxon>
        <taxon>Nitrosococcus</taxon>
    </lineage>
</organism>
<reference key="1">
    <citation type="journal article" date="2006" name="Appl. Environ. Microbiol.">
        <title>Complete genome sequence of the marine, chemolithoautotrophic, ammonia-oxidizing bacterium Nitrosococcus oceani ATCC 19707.</title>
        <authorList>
            <person name="Klotz M.G."/>
            <person name="Arp D.J."/>
            <person name="Chain P.S.G."/>
            <person name="El-Sheikh A.F."/>
            <person name="Hauser L.J."/>
            <person name="Hommes N.G."/>
            <person name="Larimer F.W."/>
            <person name="Malfatti S.A."/>
            <person name="Norton J.M."/>
            <person name="Poret-Peterson A.T."/>
            <person name="Vergez L.M."/>
            <person name="Ward B.B."/>
        </authorList>
    </citation>
    <scope>NUCLEOTIDE SEQUENCE [LARGE SCALE GENOMIC DNA]</scope>
    <source>
        <strain>ATCC 19707 / BCRC 17464 / JCM 30415 / NCIMB 11848 / C-107</strain>
    </source>
</reference>
<gene>
    <name evidence="1" type="primary">dnaK</name>
    <name type="ordered locus">Noc_2811</name>
</gene>
<feature type="chain" id="PRO_0000225986" description="Chaperone protein DnaK">
    <location>
        <begin position="1"/>
        <end position="640"/>
    </location>
</feature>
<feature type="region of interest" description="Disordered" evidence="2">
    <location>
        <begin position="603"/>
        <end position="640"/>
    </location>
</feature>
<feature type="compositionally biased region" description="Basic and acidic residues" evidence="2">
    <location>
        <begin position="611"/>
        <end position="621"/>
    </location>
</feature>
<feature type="compositionally biased region" description="Acidic residues" evidence="2">
    <location>
        <begin position="622"/>
        <end position="632"/>
    </location>
</feature>
<feature type="modified residue" description="Phosphothreonine; by autocatalysis" evidence="1">
    <location>
        <position position="199"/>
    </location>
</feature>
<comment type="function">
    <text evidence="1">Acts as a chaperone.</text>
</comment>
<comment type="induction">
    <text evidence="1">By stress conditions e.g. heat shock.</text>
</comment>
<comment type="similarity">
    <text evidence="1">Belongs to the heat shock protein 70 family.</text>
</comment>
<dbReference type="EMBL" id="CP000127">
    <property type="protein sequence ID" value="ABA59258.1"/>
    <property type="molecule type" value="Genomic_DNA"/>
</dbReference>
<dbReference type="RefSeq" id="WP_002811989.1">
    <property type="nucleotide sequence ID" value="NC_007484.1"/>
</dbReference>
<dbReference type="SMR" id="Q3J7D8"/>
<dbReference type="FunCoup" id="Q3J7D8">
    <property type="interactions" value="676"/>
</dbReference>
<dbReference type="STRING" id="323261.Noc_2811"/>
<dbReference type="KEGG" id="noc:Noc_2811"/>
<dbReference type="eggNOG" id="COG0443">
    <property type="taxonomic scope" value="Bacteria"/>
</dbReference>
<dbReference type="HOGENOM" id="CLU_005965_2_1_6"/>
<dbReference type="InParanoid" id="Q3J7D8"/>
<dbReference type="Proteomes" id="UP000006838">
    <property type="component" value="Chromosome"/>
</dbReference>
<dbReference type="GO" id="GO:0005524">
    <property type="term" value="F:ATP binding"/>
    <property type="evidence" value="ECO:0007669"/>
    <property type="project" value="UniProtKB-UniRule"/>
</dbReference>
<dbReference type="GO" id="GO:0140662">
    <property type="term" value="F:ATP-dependent protein folding chaperone"/>
    <property type="evidence" value="ECO:0007669"/>
    <property type="project" value="InterPro"/>
</dbReference>
<dbReference type="GO" id="GO:0051082">
    <property type="term" value="F:unfolded protein binding"/>
    <property type="evidence" value="ECO:0007669"/>
    <property type="project" value="InterPro"/>
</dbReference>
<dbReference type="CDD" id="cd10234">
    <property type="entry name" value="ASKHA_NBD_HSP70_DnaK-like"/>
    <property type="match status" value="1"/>
</dbReference>
<dbReference type="FunFam" id="2.60.34.10:FF:000014">
    <property type="entry name" value="Chaperone protein DnaK HSP70"/>
    <property type="match status" value="1"/>
</dbReference>
<dbReference type="FunFam" id="1.20.1270.10:FF:000001">
    <property type="entry name" value="Molecular chaperone DnaK"/>
    <property type="match status" value="1"/>
</dbReference>
<dbReference type="FunFam" id="3.30.420.40:FF:000004">
    <property type="entry name" value="Molecular chaperone DnaK"/>
    <property type="match status" value="1"/>
</dbReference>
<dbReference type="FunFam" id="3.90.640.10:FF:000003">
    <property type="entry name" value="Molecular chaperone DnaK"/>
    <property type="match status" value="1"/>
</dbReference>
<dbReference type="Gene3D" id="1.20.1270.10">
    <property type="match status" value="1"/>
</dbReference>
<dbReference type="Gene3D" id="3.30.420.40">
    <property type="match status" value="2"/>
</dbReference>
<dbReference type="Gene3D" id="3.90.640.10">
    <property type="entry name" value="Actin, Chain A, domain 4"/>
    <property type="match status" value="1"/>
</dbReference>
<dbReference type="Gene3D" id="2.60.34.10">
    <property type="entry name" value="Substrate Binding Domain Of DNAk, Chain A, domain 1"/>
    <property type="match status" value="1"/>
</dbReference>
<dbReference type="HAMAP" id="MF_00332">
    <property type="entry name" value="DnaK"/>
    <property type="match status" value="1"/>
</dbReference>
<dbReference type="InterPro" id="IPR043129">
    <property type="entry name" value="ATPase_NBD"/>
</dbReference>
<dbReference type="InterPro" id="IPR012725">
    <property type="entry name" value="Chaperone_DnaK"/>
</dbReference>
<dbReference type="InterPro" id="IPR018181">
    <property type="entry name" value="Heat_shock_70_CS"/>
</dbReference>
<dbReference type="InterPro" id="IPR029048">
    <property type="entry name" value="HSP70_C_sf"/>
</dbReference>
<dbReference type="InterPro" id="IPR029047">
    <property type="entry name" value="HSP70_peptide-bd_sf"/>
</dbReference>
<dbReference type="InterPro" id="IPR013126">
    <property type="entry name" value="Hsp_70_fam"/>
</dbReference>
<dbReference type="NCBIfam" id="NF001413">
    <property type="entry name" value="PRK00290.1"/>
    <property type="match status" value="1"/>
</dbReference>
<dbReference type="NCBIfam" id="NF003520">
    <property type="entry name" value="PRK05183.1"/>
    <property type="match status" value="1"/>
</dbReference>
<dbReference type="NCBIfam" id="TIGR02350">
    <property type="entry name" value="prok_dnaK"/>
    <property type="match status" value="1"/>
</dbReference>
<dbReference type="PANTHER" id="PTHR19375">
    <property type="entry name" value="HEAT SHOCK PROTEIN 70KDA"/>
    <property type="match status" value="1"/>
</dbReference>
<dbReference type="Pfam" id="PF00012">
    <property type="entry name" value="HSP70"/>
    <property type="match status" value="1"/>
</dbReference>
<dbReference type="PRINTS" id="PR00301">
    <property type="entry name" value="HEATSHOCK70"/>
</dbReference>
<dbReference type="SUPFAM" id="SSF53067">
    <property type="entry name" value="Actin-like ATPase domain"/>
    <property type="match status" value="2"/>
</dbReference>
<dbReference type="SUPFAM" id="SSF100934">
    <property type="entry name" value="Heat shock protein 70kD (HSP70), C-terminal subdomain"/>
    <property type="match status" value="1"/>
</dbReference>
<dbReference type="SUPFAM" id="SSF100920">
    <property type="entry name" value="Heat shock protein 70kD (HSP70), peptide-binding domain"/>
    <property type="match status" value="1"/>
</dbReference>
<dbReference type="PROSITE" id="PS00297">
    <property type="entry name" value="HSP70_1"/>
    <property type="match status" value="1"/>
</dbReference>
<dbReference type="PROSITE" id="PS00329">
    <property type="entry name" value="HSP70_2"/>
    <property type="match status" value="1"/>
</dbReference>
<dbReference type="PROSITE" id="PS01036">
    <property type="entry name" value="HSP70_3"/>
    <property type="match status" value="1"/>
</dbReference>
<evidence type="ECO:0000255" key="1">
    <source>
        <dbReference type="HAMAP-Rule" id="MF_00332"/>
    </source>
</evidence>
<evidence type="ECO:0000256" key="2">
    <source>
        <dbReference type="SAM" id="MobiDB-lite"/>
    </source>
</evidence>
<keyword id="KW-0067">ATP-binding</keyword>
<keyword id="KW-0143">Chaperone</keyword>
<keyword id="KW-0547">Nucleotide-binding</keyword>
<keyword id="KW-0597">Phosphoprotein</keyword>
<keyword id="KW-1185">Reference proteome</keyword>
<keyword id="KW-0346">Stress response</keyword>
<accession>Q3J7D8</accession>
<proteinExistence type="inferred from homology"/>